<name>SPEFL_HAEIN</name>
<proteinExistence type="inferred from homology"/>
<reference key="1">
    <citation type="journal article" date="1995" name="Science">
        <title>Whole-genome random sequencing and assembly of Haemophilus influenzae Rd.</title>
        <authorList>
            <person name="Fleischmann R.D."/>
            <person name="Adams M.D."/>
            <person name="White O."/>
            <person name="Clayton R.A."/>
            <person name="Kirkness E.F."/>
            <person name="Kerlavage A.R."/>
            <person name="Bult C.J."/>
            <person name="Tomb J.-F."/>
            <person name="Dougherty B.A."/>
            <person name="Merrick J.M."/>
            <person name="McKenney K."/>
            <person name="Sutton G.G."/>
            <person name="FitzHugh W."/>
            <person name="Fields C.A."/>
            <person name="Gocayne J.D."/>
            <person name="Scott J.D."/>
            <person name="Shirley R."/>
            <person name="Liu L.-I."/>
            <person name="Glodek A."/>
            <person name="Kelley J.M."/>
            <person name="Weidman J.F."/>
            <person name="Phillips C.A."/>
            <person name="Spriggs T."/>
            <person name="Hedblom E."/>
            <person name="Cotton M.D."/>
            <person name="Utterback T.R."/>
            <person name="Hanna M.C."/>
            <person name="Nguyen D.T."/>
            <person name="Saudek D.M."/>
            <person name="Brandon R.C."/>
            <person name="Fine L.D."/>
            <person name="Fritchman J.L."/>
            <person name="Fuhrmann J.L."/>
            <person name="Geoghagen N.S.M."/>
            <person name="Gnehm C.L."/>
            <person name="McDonald L.A."/>
            <person name="Small K.V."/>
            <person name="Fraser C.M."/>
            <person name="Smith H.O."/>
            <person name="Venter J.C."/>
        </authorList>
    </citation>
    <scope>NUCLEOTIDE SEQUENCE [LARGE SCALE GENOMIC DNA]</scope>
    <source>
        <strain>ATCC 51907 / DSM 11121 / KW20 / Rd</strain>
    </source>
</reference>
<evidence type="ECO:0000255" key="1">
    <source>
        <dbReference type="HAMAP-Rule" id="MF_00851"/>
    </source>
</evidence>
<accession>P44021</accession>
<protein>
    <recommendedName>
        <fullName evidence="1">Leader peptide SpeFL</fullName>
    </recommendedName>
    <alternativeName>
        <fullName evidence="1">Arrest peptide SpeFL</fullName>
    </alternativeName>
</protein>
<sequence>MLFRTYIHRYVHTKALRFLRFNPIKGRSLMAHIRRTRHIMMPSYRSCFSYSLFASQNKPSNRAL</sequence>
<organism>
    <name type="scientific">Haemophilus influenzae (strain ATCC 51907 / DSM 11121 / KW20 / Rd)</name>
    <dbReference type="NCBI Taxonomy" id="71421"/>
    <lineage>
        <taxon>Bacteria</taxon>
        <taxon>Pseudomonadati</taxon>
        <taxon>Pseudomonadota</taxon>
        <taxon>Gammaproteobacteria</taxon>
        <taxon>Pasteurellales</taxon>
        <taxon>Pasteurellaceae</taxon>
        <taxon>Haemophilus</taxon>
    </lineage>
</organism>
<feature type="chain" id="PRO_0000077937" description="Leader peptide SpeFL">
    <location>
        <begin position="1"/>
        <end position="64"/>
    </location>
</feature>
<feature type="short sequence motif" description="Ornithine recognition loop" evidence="1">
    <location>
        <begin position="32"/>
        <end position="38"/>
    </location>
</feature>
<feature type="binding site" evidence="1">
    <location>
        <position position="35"/>
    </location>
    <ligand>
        <name>L-ornithine</name>
        <dbReference type="ChEBI" id="CHEBI:46911"/>
    </ligand>
</feature>
<keyword id="KW-0428">Leader peptide</keyword>
<keyword id="KW-1185">Reference proteome</keyword>
<keyword id="KW-0694">RNA-binding</keyword>
<keyword id="KW-0699">rRNA-binding</keyword>
<keyword id="KW-0804">Transcription</keyword>
<keyword id="KW-0805">Transcription regulation</keyword>
<keyword id="KW-0810">Translation regulation</keyword>
<gene>
    <name evidence="1" type="primary">speFL</name>
    <name type="ordered locus">HI_0592</name>
</gene>
<dbReference type="EMBL" id="L42023">
    <property type="protein sequence ID" value="AAC22259.1"/>
    <property type="molecule type" value="Genomic_DNA"/>
</dbReference>
<dbReference type="PIR" id="C64010">
    <property type="entry name" value="C64010"/>
</dbReference>
<dbReference type="STRING" id="71421.HI_0592"/>
<dbReference type="EnsemblBacteria" id="AAC22259">
    <property type="protein sequence ID" value="AAC22259"/>
    <property type="gene ID" value="HI_0592"/>
</dbReference>
<dbReference type="KEGG" id="hin:HI_0592"/>
<dbReference type="HOGENOM" id="CLU_2861483_0_0_6"/>
<dbReference type="Proteomes" id="UP000000579">
    <property type="component" value="Chromosome"/>
</dbReference>
<dbReference type="GO" id="GO:0019843">
    <property type="term" value="F:rRNA binding"/>
    <property type="evidence" value="ECO:0007669"/>
    <property type="project" value="UniProtKB-KW"/>
</dbReference>
<dbReference type="GO" id="GO:0006448">
    <property type="term" value="P:regulation of translational elongation"/>
    <property type="evidence" value="ECO:0007669"/>
    <property type="project" value="UniProtKB-UniRule"/>
</dbReference>
<dbReference type="GO" id="GO:0031556">
    <property type="term" value="P:transcriptional attenuation by ribosome"/>
    <property type="evidence" value="ECO:0007669"/>
    <property type="project" value="UniProtKB-UniRule"/>
</dbReference>
<dbReference type="HAMAP" id="MF_00851">
    <property type="entry name" value="Leader_SpeFL"/>
    <property type="match status" value="1"/>
</dbReference>
<dbReference type="InterPro" id="IPR021237">
    <property type="entry name" value="SpeFL"/>
</dbReference>
<dbReference type="Pfam" id="PF10940">
    <property type="entry name" value="SpeFL"/>
    <property type="match status" value="1"/>
</dbReference>
<comment type="function">
    <text evidence="1">A small protein (arrest peptide) encoded upstream of inducible ornithine carboxylase gene (speF) that controls expression of downstream genes (usually speF and potE) by transcriptional and translational attenuation.</text>
</comment>
<comment type="subunit">
    <text evidence="1">Binds ornithine in stalled 70S ribosomes, blocking the upper two-thirds of the exit tunnel. Contacts 23S rRNA and ribosomal proteins L4 and L22.</text>
</comment>
<comment type="induction">
    <text evidence="1">Induced by ornithine, repressed by putrescine. Part of the speFL-speF-potE operon.</text>
</comment>
<comment type="similarity">
    <text evidence="1">Belongs to the speF operon leader peptide family.</text>
</comment>